<proteinExistence type="inferred from homology"/>
<comment type="function">
    <text evidence="1">One of the essential components for the initiation of protein synthesis. Stabilizes the binding of IF-2 and IF-3 on the 30S subunit to which N-formylmethionyl-tRNA(fMet) subsequently binds. Helps modulate mRNA selection, yielding the 30S pre-initiation complex (PIC). Upon addition of the 50S ribosomal subunit IF-1, IF-2 and IF-3 are released leaving the mature 70S translation initiation complex.</text>
</comment>
<comment type="subunit">
    <text evidence="1">Component of the 30S ribosomal translation pre-initiation complex which assembles on the 30S ribosome in the order IF-2 and IF-3, IF-1 and N-formylmethionyl-tRNA(fMet); mRNA recruitment can occur at any time during PIC assembly.</text>
</comment>
<comment type="subcellular location">
    <subcellularLocation>
        <location evidence="1">Cytoplasm</location>
    </subcellularLocation>
</comment>
<comment type="similarity">
    <text evidence="1">Belongs to the IF-1 family.</text>
</comment>
<dbReference type="EMBL" id="BX294151">
    <property type="protein sequence ID" value="CAD78899.1"/>
    <property type="molecule type" value="Genomic_DNA"/>
</dbReference>
<dbReference type="RefSeq" id="NP_869442.1">
    <property type="nucleotide sequence ID" value="NC_005027.1"/>
</dbReference>
<dbReference type="RefSeq" id="WP_007328023.1">
    <property type="nucleotide sequence ID" value="NC_005027.1"/>
</dbReference>
<dbReference type="SMR" id="Q7UEY5"/>
<dbReference type="FunCoup" id="Q7UEY5">
    <property type="interactions" value="408"/>
</dbReference>
<dbReference type="STRING" id="243090.RB10468"/>
<dbReference type="EnsemblBacteria" id="CAD78899">
    <property type="protein sequence ID" value="CAD78899"/>
    <property type="gene ID" value="RB10468"/>
</dbReference>
<dbReference type="GeneID" id="90609699"/>
<dbReference type="KEGG" id="rba:RB10468"/>
<dbReference type="PATRIC" id="fig|243090.15.peg.5061"/>
<dbReference type="eggNOG" id="COG0361">
    <property type="taxonomic scope" value="Bacteria"/>
</dbReference>
<dbReference type="HOGENOM" id="CLU_151267_1_0_0"/>
<dbReference type="InParanoid" id="Q7UEY5"/>
<dbReference type="OrthoDB" id="9803250at2"/>
<dbReference type="Proteomes" id="UP000001025">
    <property type="component" value="Chromosome"/>
</dbReference>
<dbReference type="GO" id="GO:0005829">
    <property type="term" value="C:cytosol"/>
    <property type="evidence" value="ECO:0000318"/>
    <property type="project" value="GO_Central"/>
</dbReference>
<dbReference type="GO" id="GO:0043022">
    <property type="term" value="F:ribosome binding"/>
    <property type="evidence" value="ECO:0000318"/>
    <property type="project" value="GO_Central"/>
</dbReference>
<dbReference type="GO" id="GO:0019843">
    <property type="term" value="F:rRNA binding"/>
    <property type="evidence" value="ECO:0007669"/>
    <property type="project" value="UniProtKB-UniRule"/>
</dbReference>
<dbReference type="GO" id="GO:0003743">
    <property type="term" value="F:translation initiation factor activity"/>
    <property type="evidence" value="ECO:0007669"/>
    <property type="project" value="UniProtKB-UniRule"/>
</dbReference>
<dbReference type="CDD" id="cd04451">
    <property type="entry name" value="S1_IF1"/>
    <property type="match status" value="1"/>
</dbReference>
<dbReference type="FunFam" id="2.40.50.140:FF:000002">
    <property type="entry name" value="Translation initiation factor IF-1"/>
    <property type="match status" value="1"/>
</dbReference>
<dbReference type="Gene3D" id="2.40.50.140">
    <property type="entry name" value="Nucleic acid-binding proteins"/>
    <property type="match status" value="1"/>
</dbReference>
<dbReference type="HAMAP" id="MF_00075">
    <property type="entry name" value="IF_1"/>
    <property type="match status" value="1"/>
</dbReference>
<dbReference type="InterPro" id="IPR012340">
    <property type="entry name" value="NA-bd_OB-fold"/>
</dbReference>
<dbReference type="InterPro" id="IPR006196">
    <property type="entry name" value="RNA-binding_domain_S1_IF1"/>
</dbReference>
<dbReference type="InterPro" id="IPR003029">
    <property type="entry name" value="S1_domain"/>
</dbReference>
<dbReference type="InterPro" id="IPR004368">
    <property type="entry name" value="TIF_IF1"/>
</dbReference>
<dbReference type="NCBIfam" id="TIGR00008">
    <property type="entry name" value="infA"/>
    <property type="match status" value="1"/>
</dbReference>
<dbReference type="PANTHER" id="PTHR33370">
    <property type="entry name" value="TRANSLATION INITIATION FACTOR IF-1, CHLOROPLASTIC"/>
    <property type="match status" value="1"/>
</dbReference>
<dbReference type="PANTHER" id="PTHR33370:SF1">
    <property type="entry name" value="TRANSLATION INITIATION FACTOR IF-1, CHLOROPLASTIC"/>
    <property type="match status" value="1"/>
</dbReference>
<dbReference type="Pfam" id="PF01176">
    <property type="entry name" value="eIF-1a"/>
    <property type="match status" value="1"/>
</dbReference>
<dbReference type="SMART" id="SM00316">
    <property type="entry name" value="S1"/>
    <property type="match status" value="1"/>
</dbReference>
<dbReference type="SUPFAM" id="SSF50249">
    <property type="entry name" value="Nucleic acid-binding proteins"/>
    <property type="match status" value="1"/>
</dbReference>
<dbReference type="PROSITE" id="PS50832">
    <property type="entry name" value="S1_IF1_TYPE"/>
    <property type="match status" value="1"/>
</dbReference>
<sequence length="73" mass="8417">MGKKEEAFEVEGTVTQALANTRFRVQLETGNEVMAHVAGRMRKHFIRIVPGDKVRVELSPYDLTKGRIVYRER</sequence>
<keyword id="KW-0963">Cytoplasm</keyword>
<keyword id="KW-0396">Initiation factor</keyword>
<keyword id="KW-0648">Protein biosynthesis</keyword>
<keyword id="KW-1185">Reference proteome</keyword>
<keyword id="KW-0694">RNA-binding</keyword>
<keyword id="KW-0699">rRNA-binding</keyword>
<evidence type="ECO:0000255" key="1">
    <source>
        <dbReference type="HAMAP-Rule" id="MF_00075"/>
    </source>
</evidence>
<feature type="chain" id="PRO_0000095851" description="Translation initiation factor IF-1">
    <location>
        <begin position="1"/>
        <end position="73"/>
    </location>
</feature>
<feature type="domain" description="S1-like" evidence="1">
    <location>
        <begin position="1"/>
        <end position="73"/>
    </location>
</feature>
<protein>
    <recommendedName>
        <fullName evidence="1">Translation initiation factor IF-1</fullName>
    </recommendedName>
</protein>
<accession>Q7UEY5</accession>
<organism>
    <name type="scientific">Rhodopirellula baltica (strain DSM 10527 / NCIMB 13988 / SH1)</name>
    <dbReference type="NCBI Taxonomy" id="243090"/>
    <lineage>
        <taxon>Bacteria</taxon>
        <taxon>Pseudomonadati</taxon>
        <taxon>Planctomycetota</taxon>
        <taxon>Planctomycetia</taxon>
        <taxon>Pirellulales</taxon>
        <taxon>Pirellulaceae</taxon>
        <taxon>Rhodopirellula</taxon>
    </lineage>
</organism>
<gene>
    <name evidence="1" type="primary">infA</name>
    <name type="ordered locus">RB10468</name>
</gene>
<reference key="1">
    <citation type="journal article" date="2003" name="Proc. Natl. Acad. Sci. U.S.A.">
        <title>Complete genome sequence of the marine planctomycete Pirellula sp. strain 1.</title>
        <authorList>
            <person name="Gloeckner F.O."/>
            <person name="Kube M."/>
            <person name="Bauer M."/>
            <person name="Teeling H."/>
            <person name="Lombardot T."/>
            <person name="Ludwig W."/>
            <person name="Gade D."/>
            <person name="Beck A."/>
            <person name="Borzym K."/>
            <person name="Heitmann K."/>
            <person name="Rabus R."/>
            <person name="Schlesner H."/>
            <person name="Amann R."/>
            <person name="Reinhardt R."/>
        </authorList>
    </citation>
    <scope>NUCLEOTIDE SEQUENCE [LARGE SCALE GENOMIC DNA]</scope>
    <source>
        <strain>DSM 10527 / NCIMB 13988 / SH1</strain>
    </source>
</reference>
<name>IF1_RHOBA</name>